<name>PPIH_HUMAN</name>
<protein>
    <recommendedName>
        <fullName>Peptidyl-prolyl cis-trans isomerase H</fullName>
        <shortName>PPIase H</shortName>
        <ecNumber evidence="5">5.2.1.8</ecNumber>
    </recommendedName>
    <alternativeName>
        <fullName>Rotamase H</fullName>
    </alternativeName>
    <alternativeName>
        <fullName>Small nuclear ribonucleoprotein particle-specific cyclophilin H</fullName>
        <shortName>CypH</shortName>
    </alternativeName>
    <alternativeName>
        <fullName>U-snRNP-associated cyclophilin SnuCyp-20</fullName>
        <shortName>USA-CYP</shortName>
    </alternativeName>
</protein>
<feature type="initiator methionine" description="Removed" evidence="11 12">
    <location>
        <position position="1"/>
    </location>
</feature>
<feature type="chain" id="PRO_0000064162" description="Peptidyl-prolyl cis-trans isomerase H">
    <location>
        <begin position="2"/>
        <end position="177"/>
    </location>
</feature>
<feature type="domain" description="PPIase cyclophilin-type" evidence="1">
    <location>
        <begin position="14"/>
        <end position="176"/>
    </location>
</feature>
<feature type="modified residue" description="N-acetylalanine" evidence="11 12">
    <location>
        <position position="2"/>
    </location>
</feature>
<feature type="splice variant" id="VSP_056587" description="In isoform 2." evidence="8">
    <original>MAVANSSPVNPVVFFDVSIGGQEVGRMKIELFADVVPKTAENFRQFCTGEF</original>
    <variation>MIAGDSDR</variation>
    <location>
        <begin position="1"/>
        <end position="51"/>
    </location>
</feature>
<feature type="mutagenesis site" description="Abolishes inhibition by cyclosporin A." evidence="2">
    <original>W</original>
    <variation>F</variation>
    <location>
        <position position="133"/>
    </location>
</feature>
<feature type="strand" evidence="13">
    <location>
        <begin position="12"/>
        <end position="19"/>
    </location>
</feature>
<feature type="strand" evidence="13">
    <location>
        <begin position="22"/>
        <end position="31"/>
    </location>
</feature>
<feature type="turn" evidence="13">
    <location>
        <begin position="33"/>
        <end position="35"/>
    </location>
</feature>
<feature type="helix" evidence="13">
    <location>
        <begin position="37"/>
        <end position="48"/>
    </location>
</feature>
<feature type="strand" evidence="13">
    <location>
        <begin position="67"/>
        <end position="69"/>
    </location>
</feature>
<feature type="turn" evidence="13">
    <location>
        <begin position="70"/>
        <end position="72"/>
    </location>
</feature>
<feature type="strand" evidence="13">
    <location>
        <begin position="73"/>
        <end position="76"/>
    </location>
</feature>
<feature type="turn" evidence="13">
    <location>
        <begin position="79"/>
        <end position="81"/>
    </location>
</feature>
<feature type="strand" evidence="13">
    <location>
        <begin position="82"/>
        <end position="84"/>
    </location>
</feature>
<feature type="strand" evidence="13">
    <location>
        <begin position="109"/>
        <end position="112"/>
    </location>
</feature>
<feature type="strand" evidence="13">
    <location>
        <begin position="124"/>
        <end position="129"/>
    </location>
</feature>
<feature type="helix" evidence="13">
    <location>
        <begin position="132"/>
        <end position="134"/>
    </location>
</feature>
<feature type="turn" evidence="13">
    <location>
        <begin position="135"/>
        <end position="137"/>
    </location>
</feature>
<feature type="strand" evidence="13">
    <location>
        <begin position="140"/>
        <end position="146"/>
    </location>
</feature>
<feature type="helix" evidence="13">
    <location>
        <begin position="148"/>
        <end position="155"/>
    </location>
</feature>
<feature type="helix" evidence="13">
    <location>
        <begin position="161"/>
        <end position="163"/>
    </location>
</feature>
<feature type="strand" evidence="13">
    <location>
        <begin position="165"/>
        <end position="167"/>
    </location>
</feature>
<feature type="strand" evidence="13">
    <location>
        <begin position="169"/>
        <end position="176"/>
    </location>
</feature>
<dbReference type="EC" id="5.2.1.8" evidence="5"/>
<dbReference type="EMBL" id="AF016371">
    <property type="protein sequence ID" value="AAC51927.1"/>
    <property type="molecule type" value="mRNA"/>
</dbReference>
<dbReference type="EMBL" id="AF036331">
    <property type="protein sequence ID" value="AAC60793.1"/>
    <property type="molecule type" value="mRNA"/>
</dbReference>
<dbReference type="EMBL" id="AK294288">
    <property type="protein sequence ID" value="BAH11725.1"/>
    <property type="molecule type" value="mRNA"/>
</dbReference>
<dbReference type="EMBL" id="AC098484">
    <property type="status" value="NOT_ANNOTATED_CDS"/>
    <property type="molecule type" value="Genomic_DNA"/>
</dbReference>
<dbReference type="EMBL" id="CH471059">
    <property type="protein sequence ID" value="EAX07155.1"/>
    <property type="molecule type" value="Genomic_DNA"/>
</dbReference>
<dbReference type="EMBL" id="BC003412">
    <property type="protein sequence ID" value="AAH03412.1"/>
    <property type="molecule type" value="mRNA"/>
</dbReference>
<dbReference type="CCDS" id="CCDS469.1">
    <molecule id="O43447-1"/>
</dbReference>
<dbReference type="RefSeq" id="NP_001317439.1">
    <molecule id="O43447-2"/>
    <property type="nucleotide sequence ID" value="NM_001330510.2"/>
</dbReference>
<dbReference type="RefSeq" id="NP_006338.1">
    <molecule id="O43447-1"/>
    <property type="nucleotide sequence ID" value="NM_006347.4"/>
</dbReference>
<dbReference type="RefSeq" id="XP_005270419.1">
    <molecule id="O43447-1"/>
    <property type="nucleotide sequence ID" value="XM_005270362.2"/>
</dbReference>
<dbReference type="RefSeq" id="XP_016855546.1">
    <property type="nucleotide sequence ID" value="XM_017000057.1"/>
</dbReference>
<dbReference type="RefSeq" id="XP_016855547.1">
    <property type="nucleotide sequence ID" value="XM_017000058.1"/>
</dbReference>
<dbReference type="RefSeq" id="XP_016855548.1">
    <property type="nucleotide sequence ID" value="XM_017000059.1"/>
</dbReference>
<dbReference type="RefSeq" id="XP_047286822.1">
    <molecule id="O43447-1"/>
    <property type="nucleotide sequence ID" value="XM_047430866.1"/>
</dbReference>
<dbReference type="RefSeq" id="XP_054189823.1">
    <molecule id="O43447-1"/>
    <property type="nucleotide sequence ID" value="XM_054333848.1"/>
</dbReference>
<dbReference type="RefSeq" id="XP_054189824.1">
    <molecule id="O43447-1"/>
    <property type="nucleotide sequence ID" value="XM_054333849.1"/>
</dbReference>
<dbReference type="PDB" id="1MZW">
    <property type="method" value="X-ray"/>
    <property type="resolution" value="2.00 A"/>
    <property type="chains" value="A=1-177"/>
</dbReference>
<dbReference type="PDB" id="1QOI">
    <property type="method" value="X-ray"/>
    <property type="resolution" value="2.00 A"/>
    <property type="chains" value="A=1-177"/>
</dbReference>
<dbReference type="PDB" id="5O9Z">
    <property type="method" value="EM"/>
    <property type="resolution" value="4.50 A"/>
    <property type="chains" value="M=1-177"/>
</dbReference>
<dbReference type="PDB" id="6AHD">
    <property type="method" value="EM"/>
    <property type="resolution" value="3.80 A"/>
    <property type="chains" value="W=1-177"/>
</dbReference>
<dbReference type="PDB" id="8H6K">
    <property type="method" value="EM"/>
    <property type="resolution" value="2.70 A"/>
    <property type="chains" value="4H=1-177"/>
</dbReference>
<dbReference type="PDB" id="8H6L">
    <property type="method" value="EM"/>
    <property type="resolution" value="2.60 A"/>
    <property type="chains" value="4H=1-177"/>
</dbReference>
<dbReference type="PDB" id="8QO9">
    <property type="method" value="EM"/>
    <property type="resolution" value="5.29 A"/>
    <property type="chains" value="W=1-177"/>
</dbReference>
<dbReference type="PDB" id="8QZS">
    <property type="method" value="EM"/>
    <property type="resolution" value="4.10 A"/>
    <property type="chains" value="W=1-177"/>
</dbReference>
<dbReference type="PDB" id="8R09">
    <property type="method" value="EM"/>
    <property type="resolution" value="4.30 A"/>
    <property type="chains" value="W=1-177"/>
</dbReference>
<dbReference type="PDB" id="8R0B">
    <property type="method" value="EM"/>
    <property type="resolution" value="4.40 A"/>
    <property type="chains" value="W=1-177"/>
</dbReference>
<dbReference type="PDB" id="8RM5">
    <property type="method" value="EM"/>
    <property type="resolution" value="6.90 A"/>
    <property type="chains" value="W=1-177"/>
</dbReference>
<dbReference type="PDBsum" id="1MZW"/>
<dbReference type="PDBsum" id="1QOI"/>
<dbReference type="PDBsum" id="5O9Z"/>
<dbReference type="PDBsum" id="6AHD"/>
<dbReference type="PDBsum" id="8H6K"/>
<dbReference type="PDBsum" id="8H6L"/>
<dbReference type="PDBsum" id="8QO9"/>
<dbReference type="PDBsum" id="8QZS"/>
<dbReference type="PDBsum" id="8R09"/>
<dbReference type="PDBsum" id="8R0B"/>
<dbReference type="PDBsum" id="8RM5"/>
<dbReference type="EMDB" id="EMD-18529"/>
<dbReference type="EMDB" id="EMD-18781"/>
<dbReference type="EMDB" id="EMD-18787"/>
<dbReference type="EMDB" id="EMD-18789"/>
<dbReference type="EMDB" id="EMD-19349"/>
<dbReference type="EMDB" id="EMD-34507"/>
<dbReference type="EMDB" id="EMD-34508"/>
<dbReference type="EMDB" id="EMD-3766"/>
<dbReference type="EMDB" id="EMD-9624"/>
<dbReference type="SMR" id="O43447"/>
<dbReference type="BioGRID" id="115728">
    <property type="interactions" value="128"/>
</dbReference>
<dbReference type="CORUM" id="O43447"/>
<dbReference type="FunCoup" id="O43447">
    <property type="interactions" value="4297"/>
</dbReference>
<dbReference type="IntAct" id="O43447">
    <property type="interactions" value="54"/>
</dbReference>
<dbReference type="MINT" id="O43447"/>
<dbReference type="STRING" id="9606.ENSP00000306614"/>
<dbReference type="BindingDB" id="O43447"/>
<dbReference type="DrugBank" id="DB00172">
    <property type="generic name" value="Proline"/>
</dbReference>
<dbReference type="GlyGen" id="O43447">
    <property type="glycosylation" value="1 site, 1 O-linked glycan (1 site)"/>
</dbReference>
<dbReference type="iPTMnet" id="O43447"/>
<dbReference type="PhosphoSitePlus" id="O43447"/>
<dbReference type="SwissPalm" id="O43447"/>
<dbReference type="BioMuta" id="PPIH"/>
<dbReference type="jPOST" id="O43447"/>
<dbReference type="MassIVE" id="O43447"/>
<dbReference type="PaxDb" id="9606-ENSP00000306614"/>
<dbReference type="PeptideAtlas" id="O43447"/>
<dbReference type="ProteomicsDB" id="1602"/>
<dbReference type="ProteomicsDB" id="48953">
    <molecule id="O43447-1"/>
</dbReference>
<dbReference type="Pumba" id="O43447"/>
<dbReference type="Antibodypedia" id="32222">
    <property type="antibodies" value="185 antibodies from 25 providers"/>
</dbReference>
<dbReference type="DNASU" id="10465"/>
<dbReference type="Ensembl" id="ENST00000304979.8">
    <molecule id="O43447-1"/>
    <property type="protein sequence ID" value="ENSP00000306614.3"/>
    <property type="gene ID" value="ENSG00000171960.12"/>
</dbReference>
<dbReference type="Ensembl" id="ENST00000372550.6">
    <molecule id="O43447-1"/>
    <property type="protein sequence ID" value="ENSP00000361630.2"/>
    <property type="gene ID" value="ENSG00000171960.12"/>
</dbReference>
<dbReference type="Ensembl" id="ENST00000676675.1">
    <molecule id="O43447-1"/>
    <property type="protein sequence ID" value="ENSP00000503489.1"/>
    <property type="gene ID" value="ENSG00000171960.12"/>
</dbReference>
<dbReference type="Ensembl" id="ENST00000677900.1">
    <molecule id="O43447-1"/>
    <property type="protein sequence ID" value="ENSP00000504595.1"/>
    <property type="gene ID" value="ENSG00000171960.12"/>
</dbReference>
<dbReference type="Ensembl" id="ENST00000678038.1">
    <molecule id="O43447-1"/>
    <property type="protein sequence ID" value="ENSP00000504108.1"/>
    <property type="gene ID" value="ENSG00000171960.12"/>
</dbReference>
<dbReference type="Ensembl" id="ENST00000678333.1">
    <molecule id="O43447-1"/>
    <property type="protein sequence ID" value="ENSP00000503384.1"/>
    <property type="gene ID" value="ENSG00000171960.12"/>
</dbReference>
<dbReference type="Ensembl" id="ENST00000678803.1">
    <molecule id="O43447-1"/>
    <property type="protein sequence ID" value="ENSP00000503922.1"/>
    <property type="gene ID" value="ENSG00000171960.12"/>
</dbReference>
<dbReference type="GeneID" id="10465"/>
<dbReference type="KEGG" id="hsa:10465"/>
<dbReference type="MANE-Select" id="ENST00000304979.8">
    <property type="protein sequence ID" value="ENSP00000306614.3"/>
    <property type="RefSeq nucleotide sequence ID" value="NM_006347.4"/>
    <property type="RefSeq protein sequence ID" value="NP_006338.1"/>
</dbReference>
<dbReference type="UCSC" id="uc009vwl.3">
    <molecule id="O43447-1"/>
    <property type="organism name" value="human"/>
</dbReference>
<dbReference type="AGR" id="HGNC:14651"/>
<dbReference type="CTD" id="10465"/>
<dbReference type="DisGeNET" id="10465"/>
<dbReference type="GeneCards" id="PPIH"/>
<dbReference type="HGNC" id="HGNC:14651">
    <property type="gene designation" value="PPIH"/>
</dbReference>
<dbReference type="HPA" id="ENSG00000171960">
    <property type="expression patterns" value="Low tissue specificity"/>
</dbReference>
<dbReference type="MIM" id="606095">
    <property type="type" value="gene"/>
</dbReference>
<dbReference type="neXtProt" id="NX_O43447"/>
<dbReference type="OpenTargets" id="ENSG00000171960"/>
<dbReference type="PharmGKB" id="PA33586"/>
<dbReference type="VEuPathDB" id="HostDB:ENSG00000171960"/>
<dbReference type="eggNOG" id="KOG0879">
    <property type="taxonomic scope" value="Eukaryota"/>
</dbReference>
<dbReference type="GeneTree" id="ENSGT00940000154721"/>
<dbReference type="InParanoid" id="O43447"/>
<dbReference type="OMA" id="SVWGQVI"/>
<dbReference type="OrthoDB" id="193499at2759"/>
<dbReference type="PAN-GO" id="O43447">
    <property type="GO annotations" value="6 GO annotations based on evolutionary models"/>
</dbReference>
<dbReference type="PhylomeDB" id="O43447"/>
<dbReference type="TreeFam" id="TF312958"/>
<dbReference type="BRENDA" id="5.2.1.8">
    <property type="organism ID" value="2681"/>
</dbReference>
<dbReference type="PathwayCommons" id="O43447"/>
<dbReference type="Reactome" id="R-HSA-72163">
    <property type="pathway name" value="mRNA Splicing - Major Pathway"/>
</dbReference>
<dbReference type="Reactome" id="R-HSA-9692916">
    <property type="pathway name" value="SARS-CoV-1 activates/modulates innate immune responses"/>
</dbReference>
<dbReference type="SignaLink" id="O43447"/>
<dbReference type="BioGRID-ORCS" id="10465">
    <property type="hits" value="315 hits in 1162 CRISPR screens"/>
</dbReference>
<dbReference type="CD-CODE" id="804901D1">
    <property type="entry name" value="Nuclear speckle"/>
</dbReference>
<dbReference type="CD-CODE" id="91857CE7">
    <property type="entry name" value="Nucleolus"/>
</dbReference>
<dbReference type="ChiTaRS" id="PPIH">
    <property type="organism name" value="human"/>
</dbReference>
<dbReference type="EvolutionaryTrace" id="O43447"/>
<dbReference type="GeneWiki" id="PPIH"/>
<dbReference type="GenomeRNAi" id="10465"/>
<dbReference type="Pharos" id="O43447">
    <property type="development level" value="Tbio"/>
</dbReference>
<dbReference type="PRO" id="PR:O43447"/>
<dbReference type="Proteomes" id="UP000005640">
    <property type="component" value="Chromosome 1"/>
</dbReference>
<dbReference type="RNAct" id="O43447">
    <property type="molecule type" value="protein"/>
</dbReference>
<dbReference type="Bgee" id="ENSG00000171960">
    <property type="expression patterns" value="Expressed in embryo and 207 other cell types or tissues"/>
</dbReference>
<dbReference type="ExpressionAtlas" id="O43447">
    <property type="expression patterns" value="baseline and differential"/>
</dbReference>
<dbReference type="GO" id="GO:0005737">
    <property type="term" value="C:cytoplasm"/>
    <property type="evidence" value="ECO:0000314"/>
    <property type="project" value="BHF-UCL"/>
</dbReference>
<dbReference type="GO" id="GO:0005829">
    <property type="term" value="C:cytosol"/>
    <property type="evidence" value="ECO:0000304"/>
    <property type="project" value="Reactome"/>
</dbReference>
<dbReference type="GO" id="GO:0043231">
    <property type="term" value="C:intracellular membrane-bounded organelle"/>
    <property type="evidence" value="ECO:0000318"/>
    <property type="project" value="GO_Central"/>
</dbReference>
<dbReference type="GO" id="GO:0016607">
    <property type="term" value="C:nuclear speck"/>
    <property type="evidence" value="ECO:0000314"/>
    <property type="project" value="BHF-UCL"/>
</dbReference>
<dbReference type="GO" id="GO:0005654">
    <property type="term" value="C:nucleoplasm"/>
    <property type="evidence" value="ECO:0000304"/>
    <property type="project" value="Reactome"/>
</dbReference>
<dbReference type="GO" id="GO:0005681">
    <property type="term" value="C:spliceosomal complex"/>
    <property type="evidence" value="ECO:0000305"/>
    <property type="project" value="BHF-UCL"/>
</dbReference>
<dbReference type="GO" id="GO:0071001">
    <property type="term" value="C:U4/U6 snRNP"/>
    <property type="evidence" value="ECO:0000314"/>
    <property type="project" value="BHF-UCL"/>
</dbReference>
<dbReference type="GO" id="GO:0046540">
    <property type="term" value="C:U4/U6 x U5 tri-snRNP complex"/>
    <property type="evidence" value="ECO:0000314"/>
    <property type="project" value="BHF-UCL"/>
</dbReference>
<dbReference type="GO" id="GO:0016018">
    <property type="term" value="F:cyclosporin A binding"/>
    <property type="evidence" value="ECO:0000318"/>
    <property type="project" value="GO_Central"/>
</dbReference>
<dbReference type="GO" id="GO:0003755">
    <property type="term" value="F:peptidyl-prolyl cis-trans isomerase activity"/>
    <property type="evidence" value="ECO:0000314"/>
    <property type="project" value="UniProtKB"/>
</dbReference>
<dbReference type="GO" id="GO:0043021">
    <property type="term" value="F:ribonucleoprotein complex binding"/>
    <property type="evidence" value="ECO:0000314"/>
    <property type="project" value="BHF-UCL"/>
</dbReference>
<dbReference type="GO" id="GO:0000398">
    <property type="term" value="P:mRNA splicing, via spliceosome"/>
    <property type="evidence" value="ECO:0000305"/>
    <property type="project" value="BHF-UCL"/>
</dbReference>
<dbReference type="GO" id="GO:0045070">
    <property type="term" value="P:positive regulation of viral genome replication"/>
    <property type="evidence" value="ECO:0000315"/>
    <property type="project" value="UniProtKB"/>
</dbReference>
<dbReference type="GO" id="GO:0006457">
    <property type="term" value="P:protein folding"/>
    <property type="evidence" value="ECO:0000318"/>
    <property type="project" value="GO_Central"/>
</dbReference>
<dbReference type="GO" id="GO:0065003">
    <property type="term" value="P:protein-containing complex assembly"/>
    <property type="evidence" value="ECO:0000304"/>
    <property type="project" value="ProtInc"/>
</dbReference>
<dbReference type="CDD" id="cd01926">
    <property type="entry name" value="cyclophilin_ABH_like"/>
    <property type="match status" value="1"/>
</dbReference>
<dbReference type="FunFam" id="2.40.100.10:FF:000017">
    <property type="entry name" value="Peptidyl-prolyl cis-trans isomerase"/>
    <property type="match status" value="1"/>
</dbReference>
<dbReference type="Gene3D" id="2.40.100.10">
    <property type="entry name" value="Cyclophilin-like"/>
    <property type="match status" value="1"/>
</dbReference>
<dbReference type="InterPro" id="IPR029000">
    <property type="entry name" value="Cyclophilin-like_dom_sf"/>
</dbReference>
<dbReference type="InterPro" id="IPR024936">
    <property type="entry name" value="Cyclophilin-type_PPIase"/>
</dbReference>
<dbReference type="InterPro" id="IPR020892">
    <property type="entry name" value="Cyclophilin-type_PPIase_CS"/>
</dbReference>
<dbReference type="InterPro" id="IPR002130">
    <property type="entry name" value="Cyclophilin-type_PPIase_dom"/>
</dbReference>
<dbReference type="PANTHER" id="PTHR11071">
    <property type="entry name" value="PEPTIDYL-PROLYL CIS-TRANS ISOMERASE"/>
    <property type="match status" value="1"/>
</dbReference>
<dbReference type="PANTHER" id="PTHR11071:SF561">
    <property type="entry name" value="PEPTIDYL-PROLYL CIS-TRANS ISOMERASE D-RELATED"/>
    <property type="match status" value="1"/>
</dbReference>
<dbReference type="Pfam" id="PF00160">
    <property type="entry name" value="Pro_isomerase"/>
    <property type="match status" value="1"/>
</dbReference>
<dbReference type="PIRSF" id="PIRSF001467">
    <property type="entry name" value="Peptidylpro_ismrse"/>
    <property type="match status" value="1"/>
</dbReference>
<dbReference type="PRINTS" id="PR00153">
    <property type="entry name" value="CSAPPISMRASE"/>
</dbReference>
<dbReference type="SUPFAM" id="SSF50891">
    <property type="entry name" value="Cyclophilin-like"/>
    <property type="match status" value="1"/>
</dbReference>
<dbReference type="PROSITE" id="PS00170">
    <property type="entry name" value="CSA_PPIASE_1"/>
    <property type="match status" value="1"/>
</dbReference>
<dbReference type="PROSITE" id="PS50072">
    <property type="entry name" value="CSA_PPIASE_2"/>
    <property type="match status" value="1"/>
</dbReference>
<organism>
    <name type="scientific">Homo sapiens</name>
    <name type="common">Human</name>
    <dbReference type="NCBI Taxonomy" id="9606"/>
    <lineage>
        <taxon>Eukaryota</taxon>
        <taxon>Metazoa</taxon>
        <taxon>Chordata</taxon>
        <taxon>Craniata</taxon>
        <taxon>Vertebrata</taxon>
        <taxon>Euteleostomi</taxon>
        <taxon>Mammalia</taxon>
        <taxon>Eutheria</taxon>
        <taxon>Euarchontoglires</taxon>
        <taxon>Primates</taxon>
        <taxon>Haplorrhini</taxon>
        <taxon>Catarrhini</taxon>
        <taxon>Hominidae</taxon>
        <taxon>Homo</taxon>
    </lineage>
</organism>
<gene>
    <name type="primary">PPIH</name>
    <name type="synonym">CYP20</name>
    <name type="synonym">CYPH</name>
</gene>
<comment type="function">
    <text evidence="2 3 5 7">PPIase that catalyzes the cis-trans isomerization of proline imidic peptide bonds in oligopeptides and may therefore assist protein folding (PubMed:20676357). Participates in pre-mRNA splicing. May play a role in the assembly of the U4/U5/U6 tri-snRNP complex, one of the building blocks of the spliceosome. May act as a chaperone.</text>
</comment>
<comment type="catalytic activity">
    <reaction evidence="5">
        <text>[protein]-peptidylproline (omega=180) = [protein]-peptidylproline (omega=0)</text>
        <dbReference type="Rhea" id="RHEA:16237"/>
        <dbReference type="Rhea" id="RHEA-COMP:10747"/>
        <dbReference type="Rhea" id="RHEA-COMP:10748"/>
        <dbReference type="ChEBI" id="CHEBI:83833"/>
        <dbReference type="ChEBI" id="CHEBI:83834"/>
        <dbReference type="EC" id="5.2.1.8"/>
    </reaction>
</comment>
<comment type="activity regulation">
    <text evidence="10">Inhibited by cyclosporin A.</text>
</comment>
<comment type="subunit">
    <text evidence="2 3 4 6 7">Interacts directly with PRPF4. Part of a heteromeric complex containing PPIH, PRPF3 and PRPF4 that is stable in the absence of RNA. Component of the U4/U6-U5 tri-snRNP complex composed of the U4, U6 and U5 snRNAs and at least PRPF3, PRPF4, PRPF6, PRPF8, PRPF31, SNRNP200, TXNL4A, SNRNP40, DDX23, CD2BP2, PPIH, SNU13, EFTUD2, SART1 and USP39. Heterodimer with PRPF18.</text>
</comment>
<comment type="interaction">
    <interactant intactId="EBI-1055615">
        <id>O43447</id>
    </interactant>
    <interactant intactId="EBI-953896">
        <id>Q9NP55</id>
        <label>BPIFA1</label>
    </interactant>
    <organismsDiffer>false</organismsDiffer>
    <experiments>3</experiments>
</comment>
<comment type="interaction">
    <interactant intactId="EBI-1055615">
        <id>O43447</id>
    </interactant>
    <interactant intactId="EBI-10694655">
        <id>Q7L591-3</id>
        <label>DOK3</label>
    </interactant>
    <organismsDiffer>false</organismsDiffer>
    <experiments>5</experiments>
</comment>
<comment type="interaction">
    <interactant intactId="EBI-1055615">
        <id>O43447</id>
    </interactant>
    <interactant intactId="EBI-466029">
        <id>P42858</id>
        <label>HTT</label>
    </interactant>
    <organismsDiffer>false</organismsDiffer>
    <experiments>10</experiments>
</comment>
<comment type="interaction">
    <interactant intactId="EBI-1055615">
        <id>O43447</id>
    </interactant>
    <interactant intactId="EBI-739832">
        <id>Q8TBB1</id>
        <label>LNX1</label>
    </interactant>
    <organismsDiffer>false</organismsDiffer>
    <experiments>3</experiments>
</comment>
<comment type="interaction">
    <interactant intactId="EBI-1055615">
        <id>O43447</id>
    </interactant>
    <interactant intactId="EBI-2514973">
        <id>Q92802</id>
        <label>N4BP2L2</label>
    </interactant>
    <organismsDiffer>false</organismsDiffer>
    <experiments>10</experiments>
</comment>
<comment type="interaction">
    <interactant intactId="EBI-1055615">
        <id>O43447</id>
    </interactant>
    <interactant intactId="EBI-740897">
        <id>Q9GZT8</id>
        <label>NIF3L1</label>
    </interactant>
    <organismsDiffer>false</organismsDiffer>
    <experiments>3</experiments>
</comment>
<comment type="interaction">
    <interactant intactId="EBI-1055615">
        <id>O43447</id>
    </interactant>
    <interactant intactId="EBI-2798416">
        <id>Q99633</id>
        <label>PRPF18</label>
    </interactant>
    <organismsDiffer>false</organismsDiffer>
    <experiments>7</experiments>
</comment>
<comment type="interaction">
    <interactant intactId="EBI-1055615">
        <id>O43447</id>
    </interactant>
    <interactant intactId="EBI-718395">
        <id>O43172</id>
        <label>PRPF4</label>
    </interactant>
    <organismsDiffer>false</organismsDiffer>
    <experiments>6</experiments>
</comment>
<comment type="interaction">
    <interactant intactId="EBI-1055615">
        <id>O43447</id>
    </interactant>
    <interactant intactId="EBI-947187">
        <id>Q9UHD9</id>
        <label>UBQLN2</label>
    </interactant>
    <organismsDiffer>false</organismsDiffer>
    <experiments>3</experiments>
</comment>
<comment type="interaction">
    <interactant intactId="EBI-1055615">
        <id>O43447</id>
    </interactant>
    <interactant intactId="EBI-517127">
        <id>P98170</id>
        <label>XIAP</label>
    </interactant>
    <organismsDiffer>false</organismsDiffer>
    <experiments>5</experiments>
</comment>
<comment type="interaction">
    <interactant intactId="EBI-1055615">
        <id>O43447</id>
    </interactant>
    <interactant intactId="EBI-25475797">
        <id>PRO_0000037309</id>
        <label>rep</label>
        <dbReference type="UniProtKB" id="P0C6X7"/>
    </interactant>
    <organismsDiffer>true</organismsDiffer>
    <experiments>4</experiments>
</comment>
<comment type="subcellular location">
    <subcellularLocation>
        <location evidence="7">Nucleus speckle</location>
    </subcellularLocation>
    <subcellularLocation>
        <location evidence="7">Cytoplasm</location>
    </subcellularLocation>
    <text>Colocalizes with spliceosomal snRNPs. A small proportion may also be cytoplasmic.</text>
</comment>
<comment type="alternative products">
    <event type="alternative splicing"/>
    <isoform>
        <id>O43447-1</id>
        <name>1</name>
        <sequence type="displayed"/>
    </isoform>
    <isoform>
        <id>O43447-2</id>
        <name>2</name>
        <sequence type="described" ref="VSP_056587"/>
    </isoform>
</comment>
<comment type="similarity">
    <text evidence="9">Belongs to the cyclophilin-type PPIase family. PPIase H subfamily.</text>
</comment>
<accession>O43447</accession>
<accession>A6NNE7</accession>
<reference key="1">
    <citation type="journal article" date="1997" name="RNA">
        <title>A new cyclophilin and the human homologues of yeast Prp3 and Prp4 form a complex associated with U4/U6 snRNPs.</title>
        <authorList>
            <person name="Horowitz D.S."/>
            <person name="Kobayashi R."/>
            <person name="Krainer A.R."/>
        </authorList>
    </citation>
    <scope>NUCLEOTIDE SEQUENCE [MRNA] (ISOFORM 1)</scope>
    <scope>PROTEIN SEQUENCE OF 154-164</scope>
    <scope>INTERACTION WITH PRPF3; PRPF4 AND U4/U6 SNRNPS</scope>
    <source>
        <tissue>Liver</tissue>
    </source>
</reference>
<reference key="2">
    <citation type="journal article" date="1998" name="RNA">
        <title>The 20kD protein of human [U4/U6.U5] tri-snRNPs is a novel cyclophilin that forms a complex with the U4/U6-specific 60kD and 90kD proteins.</title>
        <authorList>
            <person name="Teigelkamp S."/>
            <person name="Achsel T."/>
            <person name="Mundt C."/>
            <person name="Goethel S.-F."/>
            <person name="Cronshagen U."/>
            <person name="Lane W.S."/>
            <person name="Marahiel M."/>
            <person name="Luehrmann R."/>
        </authorList>
    </citation>
    <scope>NUCLEOTIDE SEQUENCE [MRNA] (ISOFORM 1)</scope>
    <scope>PROTEIN SEQUENCE OF 62-67; 71-81 AND 153-164</scope>
    <scope>FUNCTION</scope>
    <scope>SUBCELLULAR LOCATION</scope>
    <scope>INTERACTION WITH THE U4/U5/U6 TRI-SNRNP COMPLEX</scope>
    <source>
        <tissue>Liver</tissue>
    </source>
</reference>
<reference key="3">
    <citation type="journal article" date="2004" name="Nat. Genet.">
        <title>Complete sequencing and characterization of 21,243 full-length human cDNAs.</title>
        <authorList>
            <person name="Ota T."/>
            <person name="Suzuki Y."/>
            <person name="Nishikawa T."/>
            <person name="Otsuki T."/>
            <person name="Sugiyama T."/>
            <person name="Irie R."/>
            <person name="Wakamatsu A."/>
            <person name="Hayashi K."/>
            <person name="Sato H."/>
            <person name="Nagai K."/>
            <person name="Kimura K."/>
            <person name="Makita H."/>
            <person name="Sekine M."/>
            <person name="Obayashi M."/>
            <person name="Nishi T."/>
            <person name="Shibahara T."/>
            <person name="Tanaka T."/>
            <person name="Ishii S."/>
            <person name="Yamamoto J."/>
            <person name="Saito K."/>
            <person name="Kawai Y."/>
            <person name="Isono Y."/>
            <person name="Nakamura Y."/>
            <person name="Nagahari K."/>
            <person name="Murakami K."/>
            <person name="Yasuda T."/>
            <person name="Iwayanagi T."/>
            <person name="Wagatsuma M."/>
            <person name="Shiratori A."/>
            <person name="Sudo H."/>
            <person name="Hosoiri T."/>
            <person name="Kaku Y."/>
            <person name="Kodaira H."/>
            <person name="Kondo H."/>
            <person name="Sugawara M."/>
            <person name="Takahashi M."/>
            <person name="Kanda K."/>
            <person name="Yokoi T."/>
            <person name="Furuya T."/>
            <person name="Kikkawa E."/>
            <person name="Omura Y."/>
            <person name="Abe K."/>
            <person name="Kamihara K."/>
            <person name="Katsuta N."/>
            <person name="Sato K."/>
            <person name="Tanikawa M."/>
            <person name="Yamazaki M."/>
            <person name="Ninomiya K."/>
            <person name="Ishibashi T."/>
            <person name="Yamashita H."/>
            <person name="Murakawa K."/>
            <person name="Fujimori K."/>
            <person name="Tanai H."/>
            <person name="Kimata M."/>
            <person name="Watanabe M."/>
            <person name="Hiraoka S."/>
            <person name="Chiba Y."/>
            <person name="Ishida S."/>
            <person name="Ono Y."/>
            <person name="Takiguchi S."/>
            <person name="Watanabe S."/>
            <person name="Yosida M."/>
            <person name="Hotuta T."/>
            <person name="Kusano J."/>
            <person name="Kanehori K."/>
            <person name="Takahashi-Fujii A."/>
            <person name="Hara H."/>
            <person name="Tanase T.-O."/>
            <person name="Nomura Y."/>
            <person name="Togiya S."/>
            <person name="Komai F."/>
            <person name="Hara R."/>
            <person name="Takeuchi K."/>
            <person name="Arita M."/>
            <person name="Imose N."/>
            <person name="Musashino K."/>
            <person name="Yuuki H."/>
            <person name="Oshima A."/>
            <person name="Sasaki N."/>
            <person name="Aotsuka S."/>
            <person name="Yoshikawa Y."/>
            <person name="Matsunawa H."/>
            <person name="Ichihara T."/>
            <person name="Shiohata N."/>
            <person name="Sano S."/>
            <person name="Moriya S."/>
            <person name="Momiyama H."/>
            <person name="Satoh N."/>
            <person name="Takami S."/>
            <person name="Terashima Y."/>
            <person name="Suzuki O."/>
            <person name="Nakagawa S."/>
            <person name="Senoh A."/>
            <person name="Mizoguchi H."/>
            <person name="Goto Y."/>
            <person name="Shimizu F."/>
            <person name="Wakebe H."/>
            <person name="Hishigaki H."/>
            <person name="Watanabe T."/>
            <person name="Sugiyama A."/>
            <person name="Takemoto M."/>
            <person name="Kawakami B."/>
            <person name="Yamazaki M."/>
            <person name="Watanabe K."/>
            <person name="Kumagai A."/>
            <person name="Itakura S."/>
            <person name="Fukuzumi Y."/>
            <person name="Fujimori Y."/>
            <person name="Komiyama M."/>
            <person name="Tashiro H."/>
            <person name="Tanigami A."/>
            <person name="Fujiwara T."/>
            <person name="Ono T."/>
            <person name="Yamada K."/>
            <person name="Fujii Y."/>
            <person name="Ozaki K."/>
            <person name="Hirao M."/>
            <person name="Ohmori Y."/>
            <person name="Kawabata A."/>
            <person name="Hikiji T."/>
            <person name="Kobatake N."/>
            <person name="Inagaki H."/>
            <person name="Ikema Y."/>
            <person name="Okamoto S."/>
            <person name="Okitani R."/>
            <person name="Kawakami T."/>
            <person name="Noguchi S."/>
            <person name="Itoh T."/>
            <person name="Shigeta K."/>
            <person name="Senba T."/>
            <person name="Matsumura K."/>
            <person name="Nakajima Y."/>
            <person name="Mizuno T."/>
            <person name="Morinaga M."/>
            <person name="Sasaki M."/>
            <person name="Togashi T."/>
            <person name="Oyama M."/>
            <person name="Hata H."/>
            <person name="Watanabe M."/>
            <person name="Komatsu T."/>
            <person name="Mizushima-Sugano J."/>
            <person name="Satoh T."/>
            <person name="Shirai Y."/>
            <person name="Takahashi Y."/>
            <person name="Nakagawa K."/>
            <person name="Okumura K."/>
            <person name="Nagase T."/>
            <person name="Nomura N."/>
            <person name="Kikuchi H."/>
            <person name="Masuho Y."/>
            <person name="Yamashita R."/>
            <person name="Nakai K."/>
            <person name="Yada T."/>
            <person name="Nakamura Y."/>
            <person name="Ohara O."/>
            <person name="Isogai T."/>
            <person name="Sugano S."/>
        </authorList>
    </citation>
    <scope>NUCLEOTIDE SEQUENCE [LARGE SCALE MRNA] (ISOFORM 2)</scope>
    <source>
        <tissue>Amygdala</tissue>
    </source>
</reference>
<reference key="4">
    <citation type="journal article" date="2006" name="Nature">
        <title>The DNA sequence and biological annotation of human chromosome 1.</title>
        <authorList>
            <person name="Gregory S.G."/>
            <person name="Barlow K.F."/>
            <person name="McLay K.E."/>
            <person name="Kaul R."/>
            <person name="Swarbreck D."/>
            <person name="Dunham A."/>
            <person name="Scott C.E."/>
            <person name="Howe K.L."/>
            <person name="Woodfine K."/>
            <person name="Spencer C.C.A."/>
            <person name="Jones M.C."/>
            <person name="Gillson C."/>
            <person name="Searle S."/>
            <person name="Zhou Y."/>
            <person name="Kokocinski F."/>
            <person name="McDonald L."/>
            <person name="Evans R."/>
            <person name="Phillips K."/>
            <person name="Atkinson A."/>
            <person name="Cooper R."/>
            <person name="Jones C."/>
            <person name="Hall R.E."/>
            <person name="Andrews T.D."/>
            <person name="Lloyd C."/>
            <person name="Ainscough R."/>
            <person name="Almeida J.P."/>
            <person name="Ambrose K.D."/>
            <person name="Anderson F."/>
            <person name="Andrew R.W."/>
            <person name="Ashwell R.I.S."/>
            <person name="Aubin K."/>
            <person name="Babbage A.K."/>
            <person name="Bagguley C.L."/>
            <person name="Bailey J."/>
            <person name="Beasley H."/>
            <person name="Bethel G."/>
            <person name="Bird C.P."/>
            <person name="Bray-Allen S."/>
            <person name="Brown J.Y."/>
            <person name="Brown A.J."/>
            <person name="Buckley D."/>
            <person name="Burton J."/>
            <person name="Bye J."/>
            <person name="Carder C."/>
            <person name="Chapman J.C."/>
            <person name="Clark S.Y."/>
            <person name="Clarke G."/>
            <person name="Clee C."/>
            <person name="Cobley V."/>
            <person name="Collier R.E."/>
            <person name="Corby N."/>
            <person name="Coville G.J."/>
            <person name="Davies J."/>
            <person name="Deadman R."/>
            <person name="Dunn M."/>
            <person name="Earthrowl M."/>
            <person name="Ellington A.G."/>
            <person name="Errington H."/>
            <person name="Frankish A."/>
            <person name="Frankland J."/>
            <person name="French L."/>
            <person name="Garner P."/>
            <person name="Garnett J."/>
            <person name="Gay L."/>
            <person name="Ghori M.R.J."/>
            <person name="Gibson R."/>
            <person name="Gilby L.M."/>
            <person name="Gillett W."/>
            <person name="Glithero R.J."/>
            <person name="Grafham D.V."/>
            <person name="Griffiths C."/>
            <person name="Griffiths-Jones S."/>
            <person name="Grocock R."/>
            <person name="Hammond S."/>
            <person name="Harrison E.S.I."/>
            <person name="Hart E."/>
            <person name="Haugen E."/>
            <person name="Heath P.D."/>
            <person name="Holmes S."/>
            <person name="Holt K."/>
            <person name="Howden P.J."/>
            <person name="Hunt A.R."/>
            <person name="Hunt S.E."/>
            <person name="Hunter G."/>
            <person name="Isherwood J."/>
            <person name="James R."/>
            <person name="Johnson C."/>
            <person name="Johnson D."/>
            <person name="Joy A."/>
            <person name="Kay M."/>
            <person name="Kershaw J.K."/>
            <person name="Kibukawa M."/>
            <person name="Kimberley A.M."/>
            <person name="King A."/>
            <person name="Knights A.J."/>
            <person name="Lad H."/>
            <person name="Laird G."/>
            <person name="Lawlor S."/>
            <person name="Leongamornlert D.A."/>
            <person name="Lloyd D.M."/>
            <person name="Loveland J."/>
            <person name="Lovell J."/>
            <person name="Lush M.J."/>
            <person name="Lyne R."/>
            <person name="Martin S."/>
            <person name="Mashreghi-Mohammadi M."/>
            <person name="Matthews L."/>
            <person name="Matthews N.S.W."/>
            <person name="McLaren S."/>
            <person name="Milne S."/>
            <person name="Mistry S."/>
            <person name="Moore M.J.F."/>
            <person name="Nickerson T."/>
            <person name="O'Dell C.N."/>
            <person name="Oliver K."/>
            <person name="Palmeiri A."/>
            <person name="Palmer S.A."/>
            <person name="Parker A."/>
            <person name="Patel D."/>
            <person name="Pearce A.V."/>
            <person name="Peck A.I."/>
            <person name="Pelan S."/>
            <person name="Phelps K."/>
            <person name="Phillimore B.J."/>
            <person name="Plumb R."/>
            <person name="Rajan J."/>
            <person name="Raymond C."/>
            <person name="Rouse G."/>
            <person name="Saenphimmachak C."/>
            <person name="Sehra H.K."/>
            <person name="Sheridan E."/>
            <person name="Shownkeen R."/>
            <person name="Sims S."/>
            <person name="Skuce C.D."/>
            <person name="Smith M."/>
            <person name="Steward C."/>
            <person name="Subramanian S."/>
            <person name="Sycamore N."/>
            <person name="Tracey A."/>
            <person name="Tromans A."/>
            <person name="Van Helmond Z."/>
            <person name="Wall M."/>
            <person name="Wallis J.M."/>
            <person name="White S."/>
            <person name="Whitehead S.L."/>
            <person name="Wilkinson J.E."/>
            <person name="Willey D.L."/>
            <person name="Williams H."/>
            <person name="Wilming L."/>
            <person name="Wray P.W."/>
            <person name="Wu Z."/>
            <person name="Coulson A."/>
            <person name="Vaudin M."/>
            <person name="Sulston J.E."/>
            <person name="Durbin R.M."/>
            <person name="Hubbard T."/>
            <person name="Wooster R."/>
            <person name="Dunham I."/>
            <person name="Carter N.P."/>
            <person name="McVean G."/>
            <person name="Ross M.T."/>
            <person name="Harrow J."/>
            <person name="Olson M.V."/>
            <person name="Beck S."/>
            <person name="Rogers J."/>
            <person name="Bentley D.R."/>
        </authorList>
    </citation>
    <scope>NUCLEOTIDE SEQUENCE [LARGE SCALE GENOMIC DNA]</scope>
</reference>
<reference key="5">
    <citation type="submission" date="2005-07" db="EMBL/GenBank/DDBJ databases">
        <authorList>
            <person name="Mural R.J."/>
            <person name="Istrail S."/>
            <person name="Sutton G."/>
            <person name="Florea L."/>
            <person name="Halpern A.L."/>
            <person name="Mobarry C.M."/>
            <person name="Lippert R."/>
            <person name="Walenz B."/>
            <person name="Shatkay H."/>
            <person name="Dew I."/>
            <person name="Miller J.R."/>
            <person name="Flanigan M.J."/>
            <person name="Edwards N.J."/>
            <person name="Bolanos R."/>
            <person name="Fasulo D."/>
            <person name="Halldorsson B.V."/>
            <person name="Hannenhalli S."/>
            <person name="Turner R."/>
            <person name="Yooseph S."/>
            <person name="Lu F."/>
            <person name="Nusskern D.R."/>
            <person name="Shue B.C."/>
            <person name="Zheng X.H."/>
            <person name="Zhong F."/>
            <person name="Delcher A.L."/>
            <person name="Huson D.H."/>
            <person name="Kravitz S.A."/>
            <person name="Mouchard L."/>
            <person name="Reinert K."/>
            <person name="Remington K.A."/>
            <person name="Clark A.G."/>
            <person name="Waterman M.S."/>
            <person name="Eichler E.E."/>
            <person name="Adams M.D."/>
            <person name="Hunkapiller M.W."/>
            <person name="Myers E.W."/>
            <person name="Venter J.C."/>
        </authorList>
    </citation>
    <scope>NUCLEOTIDE SEQUENCE [LARGE SCALE GENOMIC DNA]</scope>
</reference>
<reference key="6">
    <citation type="journal article" date="2004" name="Genome Res.">
        <title>The status, quality, and expansion of the NIH full-length cDNA project: the Mammalian Gene Collection (MGC).</title>
        <authorList>
            <consortium name="The MGC Project Team"/>
        </authorList>
    </citation>
    <scope>NUCLEOTIDE SEQUENCE [LARGE SCALE MRNA] (ISOFORM 1)</scope>
    <source>
        <tissue>Placenta</tissue>
    </source>
</reference>
<reference key="7">
    <citation type="journal article" date="2002" name="EMBO J.">
        <title>A cyclophilin functions in pre-mRNA splicing.</title>
        <authorList>
            <person name="Horowitz D.S."/>
            <person name="Lee E.J."/>
            <person name="Mabon S.A."/>
            <person name="Misteli T."/>
        </authorList>
    </citation>
    <scope>FUNCTION</scope>
    <scope>MUTAGENESIS OF TRP-133</scope>
    <scope>INTERACTION WITH PRPF4 AND PRPF18</scope>
</reference>
<reference key="8">
    <citation type="journal article" date="2006" name="RNA">
        <title>The network of protein-protein interactions within the human U4/U6.U5 tri-snRNP.</title>
        <authorList>
            <person name="Liu S."/>
            <person name="Rauhut R."/>
            <person name="Vornlocher H.-P."/>
            <person name="Luehrmann R."/>
        </authorList>
    </citation>
    <scope>SUBUNIT</scope>
</reference>
<reference key="9">
    <citation type="journal article" date="2010" name="PLoS Biol.">
        <title>Structural and biochemical characterization of the human cyclophilin family of peptidyl-prolyl isomerases.</title>
        <authorList>
            <person name="Davis T.L."/>
            <person name="Walker J.R."/>
            <person name="Campagna-Slater V."/>
            <person name="Finerty P.J."/>
            <person name="Paramanathan R."/>
            <person name="Bernstein G."/>
            <person name="MacKenzie F."/>
            <person name="Tempel W."/>
            <person name="Ouyang H."/>
            <person name="Lee W.H."/>
            <person name="Eisenmesser E.Z."/>
            <person name="Dhe-Paganon S."/>
        </authorList>
    </citation>
    <scope>FUNCTION</scope>
    <scope>CATALYTIC ACTIVITY</scope>
    <scope>ACTIVITY REGULATION</scope>
</reference>
<reference key="10">
    <citation type="journal article" date="2011" name="BMC Syst. Biol.">
        <title>Initial characterization of the human central proteome.</title>
        <authorList>
            <person name="Burkard T.R."/>
            <person name="Planyavsky M."/>
            <person name="Kaupe I."/>
            <person name="Breitwieser F.P."/>
            <person name="Buerckstuemmer T."/>
            <person name="Bennett K.L."/>
            <person name="Superti-Furga G."/>
            <person name="Colinge J."/>
        </authorList>
    </citation>
    <scope>IDENTIFICATION BY MASS SPECTROMETRY [LARGE SCALE ANALYSIS]</scope>
</reference>
<reference key="11">
    <citation type="journal article" date="2012" name="Proc. Natl. Acad. Sci. U.S.A.">
        <title>N-terminal acetylome analyses and functional insights of the N-terminal acetyltransferase NatB.</title>
        <authorList>
            <person name="Van Damme P."/>
            <person name="Lasa M."/>
            <person name="Polevoda B."/>
            <person name="Gazquez C."/>
            <person name="Elosegui-Artola A."/>
            <person name="Kim D.S."/>
            <person name="De Juan-Pardo E."/>
            <person name="Demeyer K."/>
            <person name="Hole K."/>
            <person name="Larrea E."/>
            <person name="Timmerman E."/>
            <person name="Prieto J."/>
            <person name="Arnesen T."/>
            <person name="Sherman F."/>
            <person name="Gevaert K."/>
            <person name="Aldabe R."/>
        </authorList>
    </citation>
    <scope>ACETYLATION [LARGE SCALE ANALYSIS] AT ALA-2</scope>
    <scope>CLEAVAGE OF INITIATOR METHIONINE [LARGE SCALE ANALYSIS]</scope>
    <scope>IDENTIFICATION BY MASS SPECTROMETRY [LARGE SCALE ANALYSIS]</scope>
</reference>
<reference key="12">
    <citation type="journal article" date="2015" name="Proteomics">
        <title>N-terminome analysis of the human mitochondrial proteome.</title>
        <authorList>
            <person name="Vaca Jacome A.S."/>
            <person name="Rabilloud T."/>
            <person name="Schaeffer-Reiss C."/>
            <person name="Rompais M."/>
            <person name="Ayoub D."/>
            <person name="Lane L."/>
            <person name="Bairoch A."/>
            <person name="Van Dorsselaer A."/>
            <person name="Carapito C."/>
        </authorList>
    </citation>
    <scope>ACETYLATION [LARGE SCALE ANALYSIS] AT ALA-2</scope>
    <scope>CLEAVAGE OF INITIATOR METHIONINE [LARGE SCALE ANALYSIS]</scope>
    <scope>IDENTIFICATION BY MASS SPECTROMETRY [LARGE SCALE ANALYSIS]</scope>
</reference>
<reference key="13">
    <citation type="journal article" date="2000" name="J. Biol. Chem.">
        <title>Crystal structure of the human U4/U6 small nuclear ribonucleoprotein particle-specific SnuCyp-20, a nuclear cyclophilin.</title>
        <authorList>
            <person name="Reidt U."/>
            <person name="Reuter K."/>
            <person name="Achsel T."/>
            <person name="Ingelfinger D."/>
            <person name="Luehrmann R."/>
            <person name="Ficner R."/>
        </authorList>
    </citation>
    <scope>X-RAY CRYSTALLOGRAPHY (2.0 ANGSTROMS) OF 5-177</scope>
</reference>
<reference key="14">
    <citation type="journal article" date="2003" name="J. Mol. Biol.">
        <title>Crystal structure of a complex between human spliceosomal cyclophilin H and a U4/U6 snRNP-60K peptide.</title>
        <authorList>
            <person name="Reidt U."/>
            <person name="Wahl M.C."/>
            <person name="Fasshauer D."/>
            <person name="Horowitz D.S."/>
            <person name="Luehrmann R."/>
            <person name="Ficner R."/>
        </authorList>
    </citation>
    <scope>X-RAY CRYSTALLOGRAPHY (2.0 ANGSTROMS) OF 5-177 IN COMPLEX WITH PRPF4</scope>
    <scope>FUNCTION</scope>
</reference>
<evidence type="ECO:0000255" key="1">
    <source>
        <dbReference type="PROSITE-ProRule" id="PRU00156"/>
    </source>
</evidence>
<evidence type="ECO:0000269" key="2">
    <source>
    </source>
</evidence>
<evidence type="ECO:0000269" key="3">
    <source>
    </source>
</evidence>
<evidence type="ECO:0000269" key="4">
    <source>
    </source>
</evidence>
<evidence type="ECO:0000269" key="5">
    <source>
    </source>
</evidence>
<evidence type="ECO:0000269" key="6">
    <source>
    </source>
</evidence>
<evidence type="ECO:0000269" key="7">
    <source>
    </source>
</evidence>
<evidence type="ECO:0000303" key="8">
    <source>
    </source>
</evidence>
<evidence type="ECO:0000305" key="9"/>
<evidence type="ECO:0000305" key="10">
    <source>
    </source>
</evidence>
<evidence type="ECO:0007744" key="11">
    <source>
    </source>
</evidence>
<evidence type="ECO:0007744" key="12">
    <source>
    </source>
</evidence>
<evidence type="ECO:0007829" key="13">
    <source>
        <dbReference type="PDB" id="1MZW"/>
    </source>
</evidence>
<sequence>MAVANSSPVNPVVFFDVSIGGQEVGRMKIELFADVVPKTAENFRQFCTGEFRKDGVPIGYKGSTFHRVIKDFMIQGGDFVNGDGTGVASIYRGPFADENFKLRHSAPGLLSMANSGPSTNGCQFFITCSKCDWLDGKHVVFGKIIDGLLVMRKIENVPTGPNNKPKLPVVISQCGEM</sequence>
<keyword id="KW-0002">3D-structure</keyword>
<keyword id="KW-0007">Acetylation</keyword>
<keyword id="KW-0025">Alternative splicing</keyword>
<keyword id="KW-0143">Chaperone</keyword>
<keyword id="KW-0963">Cytoplasm</keyword>
<keyword id="KW-0903">Direct protein sequencing</keyword>
<keyword id="KW-0413">Isomerase</keyword>
<keyword id="KW-0507">mRNA processing</keyword>
<keyword id="KW-0508">mRNA splicing</keyword>
<keyword id="KW-0539">Nucleus</keyword>
<keyword id="KW-1267">Proteomics identification</keyword>
<keyword id="KW-1185">Reference proteome</keyword>
<keyword id="KW-0697">Rotamase</keyword>
<keyword id="KW-0747">Spliceosome</keyword>
<proteinExistence type="evidence at protein level"/>